<feature type="chain" id="PRO_0000434887" description="Uncharacterized metal-dependent hydrolase TatD">
    <location>
        <begin position="1"/>
        <end position="264"/>
    </location>
</feature>
<feature type="binding site" evidence="1">
    <location>
        <position position="5"/>
    </location>
    <ligand>
        <name>a divalent metal cation</name>
        <dbReference type="ChEBI" id="CHEBI:60240"/>
        <label>1</label>
    </ligand>
</feature>
<feature type="binding site" evidence="1">
    <location>
        <position position="7"/>
    </location>
    <ligand>
        <name>a divalent metal cation</name>
        <dbReference type="ChEBI" id="CHEBI:60240"/>
        <label>1</label>
    </ligand>
</feature>
<feature type="binding site" evidence="1">
    <location>
        <position position="93"/>
    </location>
    <ligand>
        <name>a divalent metal cation</name>
        <dbReference type="ChEBI" id="CHEBI:60240"/>
        <label>1</label>
    </ligand>
</feature>
<feature type="binding site" evidence="1">
    <location>
        <position position="93"/>
    </location>
    <ligand>
        <name>a divalent metal cation</name>
        <dbReference type="ChEBI" id="CHEBI:60240"/>
        <label>2</label>
    </ligand>
</feature>
<feature type="binding site" evidence="1">
    <location>
        <position position="134"/>
    </location>
    <ligand>
        <name>a divalent metal cation</name>
        <dbReference type="ChEBI" id="CHEBI:60240"/>
        <label>2</label>
    </ligand>
</feature>
<feature type="binding site" evidence="1">
    <location>
        <position position="158"/>
    </location>
    <ligand>
        <name>a divalent metal cation</name>
        <dbReference type="ChEBI" id="CHEBI:60240"/>
        <label>2</label>
    </ligand>
</feature>
<feature type="binding site" evidence="1">
    <location>
        <position position="208"/>
    </location>
    <ligand>
        <name>a divalent metal cation</name>
        <dbReference type="ChEBI" id="CHEBI:60240"/>
        <label>1</label>
    </ligand>
</feature>
<organism>
    <name type="scientific">Mycobacterium tuberculosis (strain ATCC 25618 / H37Rv)</name>
    <dbReference type="NCBI Taxonomy" id="83332"/>
    <lineage>
        <taxon>Bacteria</taxon>
        <taxon>Bacillati</taxon>
        <taxon>Actinomycetota</taxon>
        <taxon>Actinomycetes</taxon>
        <taxon>Mycobacteriales</taxon>
        <taxon>Mycobacteriaceae</taxon>
        <taxon>Mycobacterium</taxon>
        <taxon>Mycobacterium tuberculosis complex</taxon>
    </lineage>
</organism>
<reference key="1">
    <citation type="journal article" date="1998" name="Nature">
        <title>Deciphering the biology of Mycobacterium tuberculosis from the complete genome sequence.</title>
        <authorList>
            <person name="Cole S.T."/>
            <person name="Brosch R."/>
            <person name="Parkhill J."/>
            <person name="Garnier T."/>
            <person name="Churcher C.M."/>
            <person name="Harris D.E."/>
            <person name="Gordon S.V."/>
            <person name="Eiglmeier K."/>
            <person name="Gas S."/>
            <person name="Barry C.E. III"/>
            <person name="Tekaia F."/>
            <person name="Badcock K."/>
            <person name="Basham D."/>
            <person name="Brown D."/>
            <person name="Chillingworth T."/>
            <person name="Connor R."/>
            <person name="Davies R.M."/>
            <person name="Devlin K."/>
            <person name="Feltwell T."/>
            <person name="Gentles S."/>
            <person name="Hamlin N."/>
            <person name="Holroyd S."/>
            <person name="Hornsby T."/>
            <person name="Jagels K."/>
            <person name="Krogh A."/>
            <person name="McLean J."/>
            <person name="Moule S."/>
            <person name="Murphy L.D."/>
            <person name="Oliver S."/>
            <person name="Osborne J."/>
            <person name="Quail M.A."/>
            <person name="Rajandream M.A."/>
            <person name="Rogers J."/>
            <person name="Rutter S."/>
            <person name="Seeger K."/>
            <person name="Skelton S."/>
            <person name="Squares S."/>
            <person name="Squares R."/>
            <person name="Sulston J.E."/>
            <person name="Taylor K."/>
            <person name="Whitehead S."/>
            <person name="Barrell B.G."/>
        </authorList>
    </citation>
    <scope>NUCLEOTIDE SEQUENCE [LARGE SCALE GENOMIC DNA]</scope>
    <source>
        <strain>ATCC 25618 / H37Rv</strain>
    </source>
</reference>
<reference key="2">
    <citation type="journal article" date="2006" name="J. Bacteriol.">
        <title>Inactivation of Rv2525c, a substrate of the twin arginine translocation (Tat) system of Mycobacterium tuberculosis, increases beta-lactam susceptibility and virulence.</title>
        <authorList>
            <person name="Saint-Joanis B."/>
            <person name="Demangel C."/>
            <person name="Jackson M."/>
            <person name="Brodin P."/>
            <person name="Marsollier L."/>
            <person name="Boshoff H."/>
            <person name="Cole S.T."/>
        </authorList>
    </citation>
    <scope>DISRUPTION PHENOTYPE</scope>
    <source>
        <strain>H37Rv</strain>
    </source>
</reference>
<reference key="3">
    <citation type="journal article" date="2011" name="Mol. Cell. Proteomics">
        <title>Proteogenomic analysis of Mycobacterium tuberculosis by high resolution mass spectrometry.</title>
        <authorList>
            <person name="Kelkar D.S."/>
            <person name="Kumar D."/>
            <person name="Kumar P."/>
            <person name="Balakrishnan L."/>
            <person name="Muthusamy B."/>
            <person name="Yadav A.K."/>
            <person name="Shrivastava P."/>
            <person name="Marimuthu A."/>
            <person name="Anand S."/>
            <person name="Sundaram H."/>
            <person name="Kingsbury R."/>
            <person name="Harsha H.C."/>
            <person name="Nair B."/>
            <person name="Prasad T.S."/>
            <person name="Chauhan D.S."/>
            <person name="Katoch K."/>
            <person name="Katoch V.M."/>
            <person name="Kumar P."/>
            <person name="Chaerkady R."/>
            <person name="Ramachandran S."/>
            <person name="Dash D."/>
            <person name="Pandey A."/>
        </authorList>
    </citation>
    <scope>IDENTIFICATION BY MASS SPECTROMETRY [LARGE SCALE ANALYSIS]</scope>
    <source>
        <strain>ATCC 25618 / H37Rv</strain>
    </source>
</reference>
<comment type="cofactor">
    <cofactor evidence="1">
        <name>a divalent metal cation</name>
        <dbReference type="ChEBI" id="CHEBI:60240"/>
    </cofactor>
    <text evidence="1">Binds 2 divalent metal cations per subunit.</text>
</comment>
<comment type="disruption phenotype">
    <text evidence="2">Not essential for growth.</text>
</comment>
<comment type="similarity">
    <text evidence="3">Belongs to the metallo-dependent hydrolases superfamily. TatD-type hydrolase family.</text>
</comment>
<accession>O08343</accession>
<accession>I6XWT3</accession>
<accession>L0T861</accession>
<keyword id="KW-0378">Hydrolase</keyword>
<keyword id="KW-0479">Metal-binding</keyword>
<keyword id="KW-1185">Reference proteome</keyword>
<sequence>MVDAHTHLDACGARDADTVRSLVERAAAAGVTAVVTVADDLESARWVTRAAEWDRRVYAAVALHPTRADALTDAARAELERLVAHPRVVAVGETGIDMYWPGRLDGCAEPHVQREAFAWHIDLAKRTGKPLMIHNRQADRDVLDVLRAEGAPDTVILHCFSSDAAMARTCVDAGWLLSLSGTVSFRTARELREAVPLMPVEQLLVETDAPYLTPHPHRGLANEPYCLPYTVRALAELVNRRPEEVALITTSNARRAYGLGWMRQ</sequence>
<dbReference type="EC" id="3.1.-.-" evidence="3"/>
<dbReference type="EMBL" id="AL123456">
    <property type="protein sequence ID" value="CCP43758.1"/>
    <property type="molecule type" value="Genomic_DNA"/>
</dbReference>
<dbReference type="RefSeq" id="NP_215524.1">
    <property type="nucleotide sequence ID" value="NC_000962.3"/>
</dbReference>
<dbReference type="RefSeq" id="WP_010886103.1">
    <property type="nucleotide sequence ID" value="NC_000962.3"/>
</dbReference>
<dbReference type="SMR" id="O08343"/>
<dbReference type="FunCoup" id="O08343">
    <property type="interactions" value="332"/>
</dbReference>
<dbReference type="STRING" id="83332.Rv1008"/>
<dbReference type="PaxDb" id="83332-Rv1008"/>
<dbReference type="DNASU" id="886047"/>
<dbReference type="GeneID" id="886047"/>
<dbReference type="KEGG" id="mtu:Rv1008"/>
<dbReference type="KEGG" id="mtv:RVBD_1008"/>
<dbReference type="PATRIC" id="fig|83332.111.peg.1119"/>
<dbReference type="TubercuList" id="Rv1008"/>
<dbReference type="eggNOG" id="COG0084">
    <property type="taxonomic scope" value="Bacteria"/>
</dbReference>
<dbReference type="InParanoid" id="O08343"/>
<dbReference type="OrthoDB" id="9810005at2"/>
<dbReference type="PhylomeDB" id="O08343"/>
<dbReference type="Proteomes" id="UP000001584">
    <property type="component" value="Chromosome"/>
</dbReference>
<dbReference type="GO" id="GO:0005829">
    <property type="term" value="C:cytosol"/>
    <property type="evidence" value="ECO:0000318"/>
    <property type="project" value="GO_Central"/>
</dbReference>
<dbReference type="GO" id="GO:0005886">
    <property type="term" value="C:plasma membrane"/>
    <property type="evidence" value="ECO:0007005"/>
    <property type="project" value="MTBBASE"/>
</dbReference>
<dbReference type="GO" id="GO:0004536">
    <property type="term" value="F:DNA nuclease activity"/>
    <property type="evidence" value="ECO:0007669"/>
    <property type="project" value="InterPro"/>
</dbReference>
<dbReference type="GO" id="GO:0046872">
    <property type="term" value="F:metal ion binding"/>
    <property type="evidence" value="ECO:0007669"/>
    <property type="project" value="UniProtKB-KW"/>
</dbReference>
<dbReference type="CDD" id="cd01310">
    <property type="entry name" value="TatD_DNAse"/>
    <property type="match status" value="1"/>
</dbReference>
<dbReference type="FunFam" id="3.20.20.140:FF:000048">
    <property type="entry name" value="AraC family transcriptional regulator"/>
    <property type="match status" value="1"/>
</dbReference>
<dbReference type="Gene3D" id="3.20.20.140">
    <property type="entry name" value="Metal-dependent hydrolases"/>
    <property type="match status" value="1"/>
</dbReference>
<dbReference type="InterPro" id="IPR018228">
    <property type="entry name" value="DNase_TatD-rel_CS"/>
</dbReference>
<dbReference type="InterPro" id="IPR032466">
    <property type="entry name" value="Metal_Hydrolase"/>
</dbReference>
<dbReference type="InterPro" id="IPR001130">
    <property type="entry name" value="TatD-like"/>
</dbReference>
<dbReference type="InterPro" id="IPR015991">
    <property type="entry name" value="TatD/YcfH-like"/>
</dbReference>
<dbReference type="NCBIfam" id="TIGR00010">
    <property type="entry name" value="YchF/TatD family DNA exonuclease"/>
    <property type="match status" value="1"/>
</dbReference>
<dbReference type="PANTHER" id="PTHR46124">
    <property type="entry name" value="D-AMINOACYL-TRNA DEACYLASE"/>
    <property type="match status" value="1"/>
</dbReference>
<dbReference type="PANTHER" id="PTHR46124:SF2">
    <property type="entry name" value="D-AMINOACYL-TRNA DEACYLASE"/>
    <property type="match status" value="1"/>
</dbReference>
<dbReference type="Pfam" id="PF01026">
    <property type="entry name" value="TatD_DNase"/>
    <property type="match status" value="1"/>
</dbReference>
<dbReference type="PIRSF" id="PIRSF005902">
    <property type="entry name" value="DNase_TatD"/>
    <property type="match status" value="1"/>
</dbReference>
<dbReference type="SUPFAM" id="SSF51556">
    <property type="entry name" value="Metallo-dependent hydrolases"/>
    <property type="match status" value="1"/>
</dbReference>
<dbReference type="PROSITE" id="PS01137">
    <property type="entry name" value="TATD_1"/>
    <property type="match status" value="1"/>
</dbReference>
<dbReference type="PROSITE" id="PS01091">
    <property type="entry name" value="TATD_3"/>
    <property type="match status" value="1"/>
</dbReference>
<name>TATD_MYCTU</name>
<evidence type="ECO:0000250" key="1">
    <source>
        <dbReference type="UniProtKB" id="P0AFQ7"/>
    </source>
</evidence>
<evidence type="ECO:0000269" key="2">
    <source>
    </source>
</evidence>
<evidence type="ECO:0000305" key="3"/>
<evidence type="ECO:0000312" key="4">
    <source>
        <dbReference type="EMBL" id="CCP43758.1"/>
    </source>
</evidence>
<gene>
    <name evidence="4" type="primary">tatD</name>
    <name evidence="4" type="ordered locus">Rv1008</name>
</gene>
<protein>
    <recommendedName>
        <fullName evidence="3">Uncharacterized metal-dependent hydrolase TatD</fullName>
        <ecNumber evidence="3">3.1.-.-</ecNumber>
    </recommendedName>
</protein>
<proteinExistence type="evidence at protein level"/>